<protein>
    <recommendedName>
        <fullName evidence="4">Copper chaperone for superoxide dismutase</fullName>
    </recommendedName>
    <alternativeName>
        <fullName>Superoxide dismutase copper chaperone</fullName>
    </alternativeName>
</protein>
<reference key="1">
    <citation type="journal article" date="2000" name="Proc. Natl. Acad. Sci. U.S.A.">
        <title>Copper chaperone for superoxide dismutase is essential to activate mammalian Cu/Zn superoxide dismutase.</title>
        <authorList>
            <person name="Wong P.C."/>
            <person name="Waggoner D."/>
            <person name="Subramaniam J.R."/>
            <person name="Tessarollo L."/>
            <person name="Bartnikas T.B."/>
            <person name="Culotta V.C."/>
            <person name="Price D.L."/>
            <person name="Rothstein J."/>
            <person name="Gitlin J.D."/>
        </authorList>
    </citation>
    <scope>NUCLEOTIDE SEQUENCE [MRNA]</scope>
    <source>
        <tissue>Brain</tissue>
    </source>
</reference>
<reference key="2">
    <citation type="journal article" date="2000" name="Cytogenet. Cell Genet.">
        <title>Cloning and mapping of murine superoxide dismutase copper chaperone (Ccsd) and mapping of the human ortholog.</title>
        <authorList>
            <person name="Moore S.D."/>
            <person name="Chen M.M."/>
            <person name="Cox D.W."/>
        </authorList>
    </citation>
    <scope>NUCLEOTIDE SEQUENCE [MRNA]</scope>
    <source>
        <strain>NOD</strain>
        <tissue>Brain</tissue>
    </source>
</reference>
<reference key="3">
    <citation type="journal article" date="2004" name="Genome Res.">
        <title>The status, quality, and expansion of the NIH full-length cDNA project: the Mammalian Gene Collection (MGC).</title>
        <authorList>
            <consortium name="The MGC Project Team"/>
        </authorList>
    </citation>
    <scope>NUCLEOTIDE SEQUENCE [LARGE SCALE MRNA]</scope>
    <source>
        <strain>C57BL/6J</strain>
        <tissue>Mammary gland</tissue>
    </source>
</reference>
<reference key="4">
    <citation type="journal article" date="2005" name="Science">
        <title>The transcriptional landscape of the mammalian genome.</title>
        <authorList>
            <person name="Carninci P."/>
            <person name="Kasukawa T."/>
            <person name="Katayama S."/>
            <person name="Gough J."/>
            <person name="Frith M.C."/>
            <person name="Maeda N."/>
            <person name="Oyama R."/>
            <person name="Ravasi T."/>
            <person name="Lenhard B."/>
            <person name="Wells C."/>
            <person name="Kodzius R."/>
            <person name="Shimokawa K."/>
            <person name="Bajic V.B."/>
            <person name="Brenner S.E."/>
            <person name="Batalov S."/>
            <person name="Forrest A.R."/>
            <person name="Zavolan M."/>
            <person name="Davis M.J."/>
            <person name="Wilming L.G."/>
            <person name="Aidinis V."/>
            <person name="Allen J.E."/>
            <person name="Ambesi-Impiombato A."/>
            <person name="Apweiler R."/>
            <person name="Aturaliya R.N."/>
            <person name="Bailey T.L."/>
            <person name="Bansal M."/>
            <person name="Baxter L."/>
            <person name="Beisel K.W."/>
            <person name="Bersano T."/>
            <person name="Bono H."/>
            <person name="Chalk A.M."/>
            <person name="Chiu K.P."/>
            <person name="Choudhary V."/>
            <person name="Christoffels A."/>
            <person name="Clutterbuck D.R."/>
            <person name="Crowe M.L."/>
            <person name="Dalla E."/>
            <person name="Dalrymple B.P."/>
            <person name="de Bono B."/>
            <person name="Della Gatta G."/>
            <person name="di Bernardo D."/>
            <person name="Down T."/>
            <person name="Engstrom P."/>
            <person name="Fagiolini M."/>
            <person name="Faulkner G."/>
            <person name="Fletcher C.F."/>
            <person name="Fukushima T."/>
            <person name="Furuno M."/>
            <person name="Futaki S."/>
            <person name="Gariboldi M."/>
            <person name="Georgii-Hemming P."/>
            <person name="Gingeras T.R."/>
            <person name="Gojobori T."/>
            <person name="Green R.E."/>
            <person name="Gustincich S."/>
            <person name="Harbers M."/>
            <person name="Hayashi Y."/>
            <person name="Hensch T.K."/>
            <person name="Hirokawa N."/>
            <person name="Hill D."/>
            <person name="Huminiecki L."/>
            <person name="Iacono M."/>
            <person name="Ikeo K."/>
            <person name="Iwama A."/>
            <person name="Ishikawa T."/>
            <person name="Jakt M."/>
            <person name="Kanapin A."/>
            <person name="Katoh M."/>
            <person name="Kawasawa Y."/>
            <person name="Kelso J."/>
            <person name="Kitamura H."/>
            <person name="Kitano H."/>
            <person name="Kollias G."/>
            <person name="Krishnan S.P."/>
            <person name="Kruger A."/>
            <person name="Kummerfeld S.K."/>
            <person name="Kurochkin I.V."/>
            <person name="Lareau L.F."/>
            <person name="Lazarevic D."/>
            <person name="Lipovich L."/>
            <person name="Liu J."/>
            <person name="Liuni S."/>
            <person name="McWilliam S."/>
            <person name="Madan Babu M."/>
            <person name="Madera M."/>
            <person name="Marchionni L."/>
            <person name="Matsuda H."/>
            <person name="Matsuzawa S."/>
            <person name="Miki H."/>
            <person name="Mignone F."/>
            <person name="Miyake S."/>
            <person name="Morris K."/>
            <person name="Mottagui-Tabar S."/>
            <person name="Mulder N."/>
            <person name="Nakano N."/>
            <person name="Nakauchi H."/>
            <person name="Ng P."/>
            <person name="Nilsson R."/>
            <person name="Nishiguchi S."/>
            <person name="Nishikawa S."/>
            <person name="Nori F."/>
            <person name="Ohara O."/>
            <person name="Okazaki Y."/>
            <person name="Orlando V."/>
            <person name="Pang K.C."/>
            <person name="Pavan W.J."/>
            <person name="Pavesi G."/>
            <person name="Pesole G."/>
            <person name="Petrovsky N."/>
            <person name="Piazza S."/>
            <person name="Reed J."/>
            <person name="Reid J.F."/>
            <person name="Ring B.Z."/>
            <person name="Ringwald M."/>
            <person name="Rost B."/>
            <person name="Ruan Y."/>
            <person name="Salzberg S.L."/>
            <person name="Sandelin A."/>
            <person name="Schneider C."/>
            <person name="Schoenbach C."/>
            <person name="Sekiguchi K."/>
            <person name="Semple C.A."/>
            <person name="Seno S."/>
            <person name="Sessa L."/>
            <person name="Sheng Y."/>
            <person name="Shibata Y."/>
            <person name="Shimada H."/>
            <person name="Shimada K."/>
            <person name="Silva D."/>
            <person name="Sinclair B."/>
            <person name="Sperling S."/>
            <person name="Stupka E."/>
            <person name="Sugiura K."/>
            <person name="Sultana R."/>
            <person name="Takenaka Y."/>
            <person name="Taki K."/>
            <person name="Tammoja K."/>
            <person name="Tan S.L."/>
            <person name="Tang S."/>
            <person name="Taylor M.S."/>
            <person name="Tegner J."/>
            <person name="Teichmann S.A."/>
            <person name="Ueda H.R."/>
            <person name="van Nimwegen E."/>
            <person name="Verardo R."/>
            <person name="Wei C.L."/>
            <person name="Yagi K."/>
            <person name="Yamanishi H."/>
            <person name="Zabarovsky E."/>
            <person name="Zhu S."/>
            <person name="Zimmer A."/>
            <person name="Hide W."/>
            <person name="Bult C."/>
            <person name="Grimmond S.M."/>
            <person name="Teasdale R.D."/>
            <person name="Liu E.T."/>
            <person name="Brusic V."/>
            <person name="Quackenbush J."/>
            <person name="Wahlestedt C."/>
            <person name="Mattick J.S."/>
            <person name="Hume D.A."/>
            <person name="Kai C."/>
            <person name="Sasaki D."/>
            <person name="Tomaru Y."/>
            <person name="Fukuda S."/>
            <person name="Kanamori-Katayama M."/>
            <person name="Suzuki M."/>
            <person name="Aoki J."/>
            <person name="Arakawa T."/>
            <person name="Iida J."/>
            <person name="Imamura K."/>
            <person name="Itoh M."/>
            <person name="Kato T."/>
            <person name="Kawaji H."/>
            <person name="Kawagashira N."/>
            <person name="Kawashima T."/>
            <person name="Kojima M."/>
            <person name="Kondo S."/>
            <person name="Konno H."/>
            <person name="Nakano K."/>
            <person name="Ninomiya N."/>
            <person name="Nishio T."/>
            <person name="Okada M."/>
            <person name="Plessy C."/>
            <person name="Shibata K."/>
            <person name="Shiraki T."/>
            <person name="Suzuki S."/>
            <person name="Tagami M."/>
            <person name="Waki K."/>
            <person name="Watahiki A."/>
            <person name="Okamura-Oho Y."/>
            <person name="Suzuki H."/>
            <person name="Kawai J."/>
            <person name="Hayashizaki Y."/>
        </authorList>
    </citation>
    <scope>NUCLEOTIDE SEQUENCE [LARGE SCALE MRNA] OF 103-274</scope>
    <source>
        <strain>C57BL/6J</strain>
        <tissue>Embryonic stem cell</tissue>
    </source>
</reference>
<reference key="5">
    <citation type="journal article" date="2010" name="Cell">
        <title>A tissue-specific atlas of mouse protein phosphorylation and expression.</title>
        <authorList>
            <person name="Huttlin E.L."/>
            <person name="Jedrychowski M.P."/>
            <person name="Elias J.E."/>
            <person name="Goswami T."/>
            <person name="Rad R."/>
            <person name="Beausoleil S.A."/>
            <person name="Villen J."/>
            <person name="Haas W."/>
            <person name="Sowa M.E."/>
            <person name="Gygi S.P."/>
        </authorList>
    </citation>
    <scope>PHOSPHORYLATION [LARGE SCALE ANALYSIS] AT SER-267</scope>
    <scope>IDENTIFICATION BY MASS SPECTROMETRY [LARGE SCALE ANALYSIS]</scope>
    <source>
        <tissue>Brain</tissue>
        <tissue>Brown adipose tissue</tissue>
        <tissue>Heart</tissue>
        <tissue>Kidney</tissue>
        <tissue>Liver</tissue>
        <tissue>Lung</tissue>
        <tissue>Pancreas</tissue>
        <tissue>Spleen</tissue>
        <tissue>Testis</tissue>
    </source>
</reference>
<keyword id="KW-0143">Chaperone</keyword>
<keyword id="KW-0186">Copper</keyword>
<keyword id="KW-0963">Cytoplasm</keyword>
<keyword id="KW-1015">Disulfide bond</keyword>
<keyword id="KW-1017">Isopeptide bond</keyword>
<keyword id="KW-0479">Metal-binding</keyword>
<keyword id="KW-0597">Phosphoprotein</keyword>
<keyword id="KW-1185">Reference proteome</keyword>
<keyword id="KW-0832">Ubl conjugation</keyword>
<keyword id="KW-0862">Zinc</keyword>
<accession>Q9WU84</accession>
<accession>Q9CRJ9</accession>
<proteinExistence type="evidence at protein level"/>
<dbReference type="EMBL" id="AF121906">
    <property type="protein sequence ID" value="AAD23832.1"/>
    <property type="molecule type" value="mRNA"/>
</dbReference>
<dbReference type="EMBL" id="AF173379">
    <property type="protein sequence ID" value="AAF70242.1"/>
    <property type="molecule type" value="mRNA"/>
</dbReference>
<dbReference type="EMBL" id="AK010264">
    <property type="protein sequence ID" value="BAB26806.1"/>
    <property type="molecule type" value="mRNA"/>
</dbReference>
<dbReference type="EMBL" id="BC026938">
    <property type="protein sequence ID" value="AAH26938.1"/>
    <property type="molecule type" value="mRNA"/>
</dbReference>
<dbReference type="CCDS" id="CCDS29438.1"/>
<dbReference type="RefSeq" id="NP_058588.1">
    <property type="nucleotide sequence ID" value="NM_016892.4"/>
</dbReference>
<dbReference type="SMR" id="Q9WU84"/>
<dbReference type="BioGRID" id="198563">
    <property type="interactions" value="4"/>
</dbReference>
<dbReference type="DIP" id="DIP-48692N"/>
<dbReference type="FunCoup" id="Q9WU84">
    <property type="interactions" value="1539"/>
</dbReference>
<dbReference type="IntAct" id="Q9WU84">
    <property type="interactions" value="3"/>
</dbReference>
<dbReference type="MINT" id="Q9WU84"/>
<dbReference type="STRING" id="10090.ENSMUSP00000035486"/>
<dbReference type="iPTMnet" id="Q9WU84"/>
<dbReference type="PhosphoSitePlus" id="Q9WU84"/>
<dbReference type="SwissPalm" id="Q9WU84"/>
<dbReference type="jPOST" id="Q9WU84"/>
<dbReference type="PaxDb" id="10090-ENSMUSP00000035486"/>
<dbReference type="ProteomicsDB" id="281257"/>
<dbReference type="Pumba" id="Q9WU84"/>
<dbReference type="Antibodypedia" id="30210">
    <property type="antibodies" value="370 antibodies from 32 providers"/>
</dbReference>
<dbReference type="DNASU" id="12460"/>
<dbReference type="Ensembl" id="ENSMUST00000037246.7">
    <property type="protein sequence ID" value="ENSMUSP00000035486.6"/>
    <property type="gene ID" value="ENSMUSG00000034108.7"/>
</dbReference>
<dbReference type="GeneID" id="12460"/>
<dbReference type="KEGG" id="mmu:12460"/>
<dbReference type="UCSC" id="uc008gba.1">
    <property type="organism name" value="mouse"/>
</dbReference>
<dbReference type="AGR" id="MGI:1333783"/>
<dbReference type="CTD" id="9973"/>
<dbReference type="MGI" id="MGI:1333783">
    <property type="gene designation" value="Ccs"/>
</dbReference>
<dbReference type="VEuPathDB" id="HostDB:ENSMUSG00000034108"/>
<dbReference type="eggNOG" id="KOG4656">
    <property type="taxonomic scope" value="Eukaryota"/>
</dbReference>
<dbReference type="GeneTree" id="ENSGT00940000159785"/>
<dbReference type="HOGENOM" id="CLU_056632_0_2_1"/>
<dbReference type="InParanoid" id="Q9WU84"/>
<dbReference type="OMA" id="KNVWEER"/>
<dbReference type="OrthoDB" id="666972at2759"/>
<dbReference type="PhylomeDB" id="Q9WU84"/>
<dbReference type="TreeFam" id="TF105184"/>
<dbReference type="Reactome" id="R-MMU-3299685">
    <property type="pathway name" value="Detoxification of Reactive Oxygen Species"/>
</dbReference>
<dbReference type="BioGRID-ORCS" id="12460">
    <property type="hits" value="12 hits in 80 CRISPR screens"/>
</dbReference>
<dbReference type="ChiTaRS" id="Ccs">
    <property type="organism name" value="mouse"/>
</dbReference>
<dbReference type="PRO" id="PR:Q9WU84"/>
<dbReference type="Proteomes" id="UP000000589">
    <property type="component" value="Chromosome 19"/>
</dbReference>
<dbReference type="RNAct" id="Q9WU84">
    <property type="molecule type" value="protein"/>
</dbReference>
<dbReference type="Bgee" id="ENSMUSG00000034108">
    <property type="expression patterns" value="Expressed in saccule of membranous labyrinth and 243 other cell types or tissues"/>
</dbReference>
<dbReference type="ExpressionAtlas" id="Q9WU84">
    <property type="expression patterns" value="baseline and differential"/>
</dbReference>
<dbReference type="GO" id="GO:0005758">
    <property type="term" value="C:mitochondrial intermembrane space"/>
    <property type="evidence" value="ECO:0000304"/>
    <property type="project" value="Reactome"/>
</dbReference>
<dbReference type="GO" id="GO:0005634">
    <property type="term" value="C:nucleus"/>
    <property type="evidence" value="ECO:0007669"/>
    <property type="project" value="Ensembl"/>
</dbReference>
<dbReference type="GO" id="GO:0005507">
    <property type="term" value="F:copper ion binding"/>
    <property type="evidence" value="ECO:0007669"/>
    <property type="project" value="Ensembl"/>
</dbReference>
<dbReference type="GO" id="GO:0006801">
    <property type="term" value="P:superoxide metabolic process"/>
    <property type="evidence" value="ECO:0007669"/>
    <property type="project" value="InterPro"/>
</dbReference>
<dbReference type="CDD" id="cd00305">
    <property type="entry name" value="Cu-Zn_Superoxide_Dismutase"/>
    <property type="match status" value="1"/>
</dbReference>
<dbReference type="CDD" id="cd00371">
    <property type="entry name" value="HMA"/>
    <property type="match status" value="1"/>
</dbReference>
<dbReference type="FunFam" id="2.60.40.200:FF:000004">
    <property type="entry name" value="Copper chaperone for superoxide dismutase"/>
    <property type="match status" value="1"/>
</dbReference>
<dbReference type="FunFam" id="3.30.70.100:FF:000027">
    <property type="entry name" value="Copper chaperone for superoxide dismutase"/>
    <property type="match status" value="1"/>
</dbReference>
<dbReference type="Gene3D" id="3.30.70.100">
    <property type="match status" value="1"/>
</dbReference>
<dbReference type="Gene3D" id="2.60.40.200">
    <property type="entry name" value="Superoxide dismutase, copper/zinc binding domain"/>
    <property type="match status" value="1"/>
</dbReference>
<dbReference type="InterPro" id="IPR006121">
    <property type="entry name" value="HMA_dom"/>
</dbReference>
<dbReference type="InterPro" id="IPR036163">
    <property type="entry name" value="HMA_dom_sf"/>
</dbReference>
<dbReference type="InterPro" id="IPR036423">
    <property type="entry name" value="SOD-like_Cu/Zn_dom_sf"/>
</dbReference>
<dbReference type="InterPro" id="IPR024134">
    <property type="entry name" value="SOD_Cu/Zn_/chaperone"/>
</dbReference>
<dbReference type="InterPro" id="IPR018152">
    <property type="entry name" value="SOD_Cu/Zn_BS"/>
</dbReference>
<dbReference type="InterPro" id="IPR001424">
    <property type="entry name" value="SOD_Cu_Zn_dom"/>
</dbReference>
<dbReference type="PANTHER" id="PTHR10003">
    <property type="entry name" value="SUPEROXIDE DISMUTASE CU-ZN -RELATED"/>
    <property type="match status" value="1"/>
</dbReference>
<dbReference type="Pfam" id="PF00403">
    <property type="entry name" value="HMA"/>
    <property type="match status" value="1"/>
</dbReference>
<dbReference type="Pfam" id="PF00080">
    <property type="entry name" value="Sod_Cu"/>
    <property type="match status" value="1"/>
</dbReference>
<dbReference type="PRINTS" id="PR00068">
    <property type="entry name" value="CUZNDISMTASE"/>
</dbReference>
<dbReference type="SUPFAM" id="SSF49329">
    <property type="entry name" value="Cu,Zn superoxide dismutase-like"/>
    <property type="match status" value="1"/>
</dbReference>
<dbReference type="SUPFAM" id="SSF55008">
    <property type="entry name" value="HMA, heavy metal-associated domain"/>
    <property type="match status" value="1"/>
</dbReference>
<dbReference type="PROSITE" id="PS50846">
    <property type="entry name" value="HMA_2"/>
    <property type="match status" value="1"/>
</dbReference>
<dbReference type="PROSITE" id="PS00332">
    <property type="entry name" value="SOD_CU_ZN_2"/>
    <property type="match status" value="1"/>
</dbReference>
<comment type="function">
    <text>Delivers copper to copper zinc superoxide dismutase (SOD1).</text>
</comment>
<comment type="cofactor">
    <cofactor evidence="2">
        <name>Cu(2+)</name>
        <dbReference type="ChEBI" id="CHEBI:29036"/>
    </cofactor>
    <text evidence="2">Binds 2 copper ions per subunit.</text>
</comment>
<comment type="cofactor">
    <cofactor evidence="2">
        <name>Zn(2+)</name>
        <dbReference type="ChEBI" id="CHEBI:29105"/>
    </cofactor>
    <text evidence="2">Binds 1 zinc ion per subunit.</text>
</comment>
<comment type="subunit">
    <text evidence="2">Homodimer, and heterodimer with SOD1. Interacts with COMMD1. Interacts with XIAP/BIRC4. Interacts with SLC31A1(via C-terminal domain); this interaction is Cu(1+)-mediated. The heterodimer CCS:SOD1 interacts with SLC31A1; this heterotrimer is Cu(1+)-mediated and its maintenance is regulated through SOD1 activation.</text>
</comment>
<comment type="subcellular location">
    <subcellularLocation>
        <location evidence="1">Cytoplasm</location>
    </subcellularLocation>
</comment>
<comment type="tissue specificity">
    <text>Ubiquitous.</text>
</comment>
<comment type="PTM">
    <text evidence="1">Ubiquitinion by XIAP/BIRC4 leads to enhancement of its chaperone activity toward its physiologic target, SOD1, rather than proteasomal degradation. XIAP/BIRC4 preferentially ubiquitinates at Lys-241 (By similarity).</text>
</comment>
<comment type="similarity">
    <text evidence="4">In the C-terminal section; belongs to the Cu-Zn superoxide dismutase family.</text>
</comment>
<gene>
    <name evidence="5" type="primary">Ccs</name>
    <name type="synonym">Ccsd</name>
</gene>
<evidence type="ECO:0000250" key="1"/>
<evidence type="ECO:0000250" key="2">
    <source>
        <dbReference type="UniProtKB" id="O14618"/>
    </source>
</evidence>
<evidence type="ECO:0000255" key="3">
    <source>
        <dbReference type="PROSITE-ProRule" id="PRU00280"/>
    </source>
</evidence>
<evidence type="ECO:0000305" key="4"/>
<evidence type="ECO:0000312" key="5">
    <source>
        <dbReference type="MGI" id="MGI:1333783"/>
    </source>
</evidence>
<evidence type="ECO:0007744" key="6">
    <source>
    </source>
</evidence>
<organism>
    <name type="scientific">Mus musculus</name>
    <name type="common">Mouse</name>
    <dbReference type="NCBI Taxonomy" id="10090"/>
    <lineage>
        <taxon>Eukaryota</taxon>
        <taxon>Metazoa</taxon>
        <taxon>Chordata</taxon>
        <taxon>Craniata</taxon>
        <taxon>Vertebrata</taxon>
        <taxon>Euteleostomi</taxon>
        <taxon>Mammalia</taxon>
        <taxon>Eutheria</taxon>
        <taxon>Euarchontoglires</taxon>
        <taxon>Glires</taxon>
        <taxon>Rodentia</taxon>
        <taxon>Myomorpha</taxon>
        <taxon>Muroidea</taxon>
        <taxon>Muridae</taxon>
        <taxon>Murinae</taxon>
        <taxon>Mus</taxon>
        <taxon>Mus</taxon>
    </lineage>
</organism>
<feature type="chain" id="PRO_0000213544" description="Copper chaperone for superoxide dismutase">
    <location>
        <begin position="1"/>
        <end position="274"/>
    </location>
</feature>
<feature type="domain" description="HMA" evidence="3">
    <location>
        <begin position="11"/>
        <end position="74"/>
    </location>
</feature>
<feature type="region of interest" description="Superoxide dismutase-like">
    <location>
        <begin position="88"/>
        <end position="234"/>
    </location>
</feature>
<feature type="binding site" evidence="3">
    <location>
        <position position="22"/>
    </location>
    <ligand>
        <name>Cu cation</name>
        <dbReference type="ChEBI" id="CHEBI:23378"/>
        <label>1</label>
    </ligand>
</feature>
<feature type="binding site" evidence="3">
    <location>
        <position position="25"/>
    </location>
    <ligand>
        <name>Cu cation</name>
        <dbReference type="ChEBI" id="CHEBI:23378"/>
        <label>1</label>
    </ligand>
</feature>
<feature type="binding site">
    <location>
        <position position="147"/>
    </location>
    <ligand>
        <name>Zn(2+)</name>
        <dbReference type="ChEBI" id="CHEBI:29105"/>
    </ligand>
</feature>
<feature type="binding site">
    <location>
        <position position="155"/>
    </location>
    <ligand>
        <name>Zn(2+)</name>
        <dbReference type="ChEBI" id="CHEBI:29105"/>
    </ligand>
</feature>
<feature type="binding site">
    <location>
        <position position="164"/>
    </location>
    <ligand>
        <name>Zn(2+)</name>
        <dbReference type="ChEBI" id="CHEBI:29105"/>
    </ligand>
</feature>
<feature type="binding site">
    <location>
        <position position="167"/>
    </location>
    <ligand>
        <name>Zn(2+)</name>
        <dbReference type="ChEBI" id="CHEBI:29105"/>
    </ligand>
</feature>
<feature type="binding site">
    <location>
        <position position="244"/>
    </location>
    <ligand>
        <name>Cu cation</name>
        <dbReference type="ChEBI" id="CHEBI:23378"/>
        <label>2</label>
    </ligand>
</feature>
<feature type="binding site">
    <location>
        <position position="246"/>
    </location>
    <ligand>
        <name>Cu cation</name>
        <dbReference type="ChEBI" id="CHEBI:23378"/>
        <label>2</label>
    </ligand>
</feature>
<feature type="modified residue" description="Phosphoserine" evidence="6">
    <location>
        <position position="267"/>
    </location>
</feature>
<feature type="disulfide bond" evidence="1">
    <location>
        <begin position="141"/>
        <end position="227"/>
    </location>
</feature>
<feature type="cross-link" description="Glycyl lysine isopeptide (Lys-Gly) (interchain with G-Cter in ubiquitin)" evidence="2">
    <location>
        <position position="76"/>
    </location>
</feature>
<feature type="cross-link" description="Glycyl lysine isopeptide (Lys-Gly) (interchain with G-Cter in ubiquitin)" evidence="2">
    <location>
        <position position="189"/>
    </location>
</feature>
<feature type="cross-link" description="Glycyl lysine isopeptide (Lys-Gly) (interchain with G-Cter in ubiquitin)" evidence="2">
    <location>
        <position position="216"/>
    </location>
</feature>
<feature type="cross-link" description="Glycyl lysine isopeptide (Lys-Gly) (interchain with G-Cter in ubiquitin)" evidence="2">
    <location>
        <position position="241"/>
    </location>
</feature>
<name>CCS_MOUSE</name>
<sequence length="274" mass="28912">MASKSGDGGTVCALEFAVQMSCQSCVDAVHKTLKGVAGVQNVDVQLENQMVLVQTTLPSQEVQALLESTGRQAVLKGMGSSQLQNLGAAVAILEGCGSIQGVVRFLQLSSELCLIEGTIDGLEPGLHGLHVHQYGDLTRDCNSCGDHFNPDGASHGGPQDTDRHRGDLGNVRAEAGGRATFRIEDKQLKVWDVIGRSLVIDEGEDDLGRGGHPLSKITGNSGKRLACGIIARSAGLFQNPKQICSCDGLTIWEERGRPIAGQGRKDSAQPPAHL</sequence>